<organism>
    <name type="scientific">Halalkalibacterium halodurans (strain ATCC BAA-125 / DSM 18197 / FERM 7344 / JCM 9153 / C-125)</name>
    <name type="common">Bacillus halodurans</name>
    <dbReference type="NCBI Taxonomy" id="272558"/>
    <lineage>
        <taxon>Bacteria</taxon>
        <taxon>Bacillati</taxon>
        <taxon>Bacillota</taxon>
        <taxon>Bacilli</taxon>
        <taxon>Bacillales</taxon>
        <taxon>Bacillaceae</taxon>
        <taxon>Halalkalibacterium (ex Joshi et al. 2022)</taxon>
    </lineage>
</organism>
<proteinExistence type="inferred from homology"/>
<gene>
    <name evidence="1" type="primary">leuD</name>
    <name type="ordered locus">BH3055</name>
</gene>
<accession>Q9K8F1</accession>
<reference key="1">
    <citation type="journal article" date="2000" name="Nucleic Acids Res.">
        <title>Complete genome sequence of the alkaliphilic bacterium Bacillus halodurans and genomic sequence comparison with Bacillus subtilis.</title>
        <authorList>
            <person name="Takami H."/>
            <person name="Nakasone K."/>
            <person name="Takaki Y."/>
            <person name="Maeno G."/>
            <person name="Sasaki R."/>
            <person name="Masui N."/>
            <person name="Fuji F."/>
            <person name="Hirama C."/>
            <person name="Nakamura Y."/>
            <person name="Ogasawara N."/>
            <person name="Kuhara S."/>
            <person name="Horikoshi K."/>
        </authorList>
    </citation>
    <scope>NUCLEOTIDE SEQUENCE [LARGE SCALE GENOMIC DNA]</scope>
    <source>
        <strain>ATCC BAA-125 / DSM 18197 / FERM 7344 / JCM 9153 / C-125</strain>
    </source>
</reference>
<feature type="chain" id="PRO_0000141781" description="3-isopropylmalate dehydratase small subunit">
    <location>
        <begin position="1"/>
        <end position="194"/>
    </location>
</feature>
<keyword id="KW-0028">Amino-acid biosynthesis</keyword>
<keyword id="KW-0100">Branched-chain amino acid biosynthesis</keyword>
<keyword id="KW-0432">Leucine biosynthesis</keyword>
<keyword id="KW-0456">Lyase</keyword>
<keyword id="KW-1185">Reference proteome</keyword>
<evidence type="ECO:0000255" key="1">
    <source>
        <dbReference type="HAMAP-Rule" id="MF_01031"/>
    </source>
</evidence>
<protein>
    <recommendedName>
        <fullName evidence="1">3-isopropylmalate dehydratase small subunit</fullName>
        <ecNumber evidence="1">4.2.1.33</ecNumber>
    </recommendedName>
    <alternativeName>
        <fullName evidence="1">Alpha-IPM isomerase</fullName>
        <shortName evidence="1">IPMI</shortName>
    </alternativeName>
    <alternativeName>
        <fullName evidence="1">Isopropylmalate isomerase</fullName>
    </alternativeName>
</protein>
<comment type="function">
    <text evidence="1">Catalyzes the isomerization between 2-isopropylmalate and 3-isopropylmalate, via the formation of 2-isopropylmaleate.</text>
</comment>
<comment type="catalytic activity">
    <reaction evidence="1">
        <text>(2R,3S)-3-isopropylmalate = (2S)-2-isopropylmalate</text>
        <dbReference type="Rhea" id="RHEA:32287"/>
        <dbReference type="ChEBI" id="CHEBI:1178"/>
        <dbReference type="ChEBI" id="CHEBI:35121"/>
        <dbReference type="EC" id="4.2.1.33"/>
    </reaction>
</comment>
<comment type="pathway">
    <text evidence="1">Amino-acid biosynthesis; L-leucine biosynthesis; L-leucine from 3-methyl-2-oxobutanoate: step 2/4.</text>
</comment>
<comment type="subunit">
    <text evidence="1">Heterodimer of LeuC and LeuD.</text>
</comment>
<comment type="similarity">
    <text evidence="1">Belongs to the LeuD family. LeuD type 1 subfamily.</text>
</comment>
<name>LEUD_HALH5</name>
<dbReference type="EC" id="4.2.1.33" evidence="1"/>
<dbReference type="EMBL" id="BA000004">
    <property type="protein sequence ID" value="BAB06774.1"/>
    <property type="molecule type" value="Genomic_DNA"/>
</dbReference>
<dbReference type="PIR" id="G84031">
    <property type="entry name" value="G84031"/>
</dbReference>
<dbReference type="RefSeq" id="WP_010899199.1">
    <property type="nucleotide sequence ID" value="NC_002570.2"/>
</dbReference>
<dbReference type="SMR" id="Q9K8F1"/>
<dbReference type="STRING" id="272558.gene:10728965"/>
<dbReference type="KEGG" id="bha:BH3055"/>
<dbReference type="eggNOG" id="COG0066">
    <property type="taxonomic scope" value="Bacteria"/>
</dbReference>
<dbReference type="HOGENOM" id="CLU_081378_0_3_9"/>
<dbReference type="OrthoDB" id="9777465at2"/>
<dbReference type="UniPathway" id="UPA00048">
    <property type="reaction ID" value="UER00071"/>
</dbReference>
<dbReference type="Proteomes" id="UP000001258">
    <property type="component" value="Chromosome"/>
</dbReference>
<dbReference type="GO" id="GO:0009316">
    <property type="term" value="C:3-isopropylmalate dehydratase complex"/>
    <property type="evidence" value="ECO:0007669"/>
    <property type="project" value="InterPro"/>
</dbReference>
<dbReference type="GO" id="GO:0003861">
    <property type="term" value="F:3-isopropylmalate dehydratase activity"/>
    <property type="evidence" value="ECO:0007669"/>
    <property type="project" value="UniProtKB-UniRule"/>
</dbReference>
<dbReference type="GO" id="GO:0009098">
    <property type="term" value="P:L-leucine biosynthetic process"/>
    <property type="evidence" value="ECO:0007669"/>
    <property type="project" value="UniProtKB-UniRule"/>
</dbReference>
<dbReference type="CDD" id="cd01577">
    <property type="entry name" value="IPMI_Swivel"/>
    <property type="match status" value="1"/>
</dbReference>
<dbReference type="FunFam" id="3.20.19.10:FF:000003">
    <property type="entry name" value="3-isopropylmalate dehydratase small subunit"/>
    <property type="match status" value="1"/>
</dbReference>
<dbReference type="Gene3D" id="3.20.19.10">
    <property type="entry name" value="Aconitase, domain 4"/>
    <property type="match status" value="1"/>
</dbReference>
<dbReference type="HAMAP" id="MF_01031">
    <property type="entry name" value="LeuD_type1"/>
    <property type="match status" value="1"/>
</dbReference>
<dbReference type="InterPro" id="IPR004431">
    <property type="entry name" value="3-IsopropMal_deHydase_ssu"/>
</dbReference>
<dbReference type="InterPro" id="IPR015928">
    <property type="entry name" value="Aconitase/3IPM_dehydase_swvl"/>
</dbReference>
<dbReference type="InterPro" id="IPR000573">
    <property type="entry name" value="AconitaseA/IPMdHydase_ssu_swvl"/>
</dbReference>
<dbReference type="InterPro" id="IPR033940">
    <property type="entry name" value="IPMI_Swivel"/>
</dbReference>
<dbReference type="InterPro" id="IPR050075">
    <property type="entry name" value="LeuD"/>
</dbReference>
<dbReference type="NCBIfam" id="TIGR00171">
    <property type="entry name" value="leuD"/>
    <property type="match status" value="1"/>
</dbReference>
<dbReference type="NCBIfam" id="NF002458">
    <property type="entry name" value="PRK01641.1"/>
    <property type="match status" value="1"/>
</dbReference>
<dbReference type="PANTHER" id="PTHR43345:SF5">
    <property type="entry name" value="3-ISOPROPYLMALATE DEHYDRATASE SMALL SUBUNIT"/>
    <property type="match status" value="1"/>
</dbReference>
<dbReference type="PANTHER" id="PTHR43345">
    <property type="entry name" value="3-ISOPROPYLMALATE DEHYDRATASE SMALL SUBUNIT 2-RELATED-RELATED"/>
    <property type="match status" value="1"/>
</dbReference>
<dbReference type="Pfam" id="PF00694">
    <property type="entry name" value="Aconitase_C"/>
    <property type="match status" value="1"/>
</dbReference>
<dbReference type="SUPFAM" id="SSF52016">
    <property type="entry name" value="LeuD/IlvD-like"/>
    <property type="match status" value="1"/>
</dbReference>
<sequence>MEPLKTHTGTIAVLDRVNVDTDQIIPKQFLKRVERTGFGQFLFFDWRFLPNGEDNPDFELNQPHAKQGTILVAGHNFGCGSSREHAPWAIKDYGFRVVIAPSFADIFYNNCFKNGILPVKLKQEEVTALMEKGKDTAYSLTVNLEAQTVTSEDGFEATFEIDGYWKEMLINGWDEIGLTLRYEEQIKQFEASRV</sequence>